<gene>
    <name type="primary">TIPIN</name>
    <name type="ORF">RCJMB04_3n6</name>
</gene>
<reference key="1">
    <citation type="journal article" date="2005" name="Genome Biol.">
        <title>Full-length cDNAs from chicken bursal lymphocytes to facilitate gene function analysis.</title>
        <authorList>
            <person name="Caldwell R.B."/>
            <person name="Kierzek A.M."/>
            <person name="Arakawa H."/>
            <person name="Bezzubov Y."/>
            <person name="Zaim J."/>
            <person name="Fiedler P."/>
            <person name="Kutter S."/>
            <person name="Blagodatski A."/>
            <person name="Kostovska D."/>
            <person name="Koter M."/>
            <person name="Plachy J."/>
            <person name="Carninci P."/>
            <person name="Hayashizaki Y."/>
            <person name="Buerstedde J.-M."/>
        </authorList>
    </citation>
    <scope>NUCLEOTIDE SEQUENCE [LARGE SCALE MRNA]</scope>
    <source>
        <strain>CB</strain>
        <tissue>Bursa of Fabricius</tissue>
    </source>
</reference>
<protein>
    <recommendedName>
        <fullName>TIMELESS-interacting protein</fullName>
    </recommendedName>
</protein>
<proteinExistence type="evidence at transcript level"/>
<organism>
    <name type="scientific">Gallus gallus</name>
    <name type="common">Chicken</name>
    <dbReference type="NCBI Taxonomy" id="9031"/>
    <lineage>
        <taxon>Eukaryota</taxon>
        <taxon>Metazoa</taxon>
        <taxon>Chordata</taxon>
        <taxon>Craniata</taxon>
        <taxon>Vertebrata</taxon>
        <taxon>Euteleostomi</taxon>
        <taxon>Archelosauria</taxon>
        <taxon>Archosauria</taxon>
        <taxon>Dinosauria</taxon>
        <taxon>Saurischia</taxon>
        <taxon>Theropoda</taxon>
        <taxon>Coelurosauria</taxon>
        <taxon>Aves</taxon>
        <taxon>Neognathae</taxon>
        <taxon>Galloanserae</taxon>
        <taxon>Galliformes</taxon>
        <taxon>Phasianidae</taxon>
        <taxon>Phasianinae</taxon>
        <taxon>Gallus</taxon>
    </lineage>
</organism>
<accession>Q5F416</accession>
<feature type="chain" id="PRO_0000305256" description="TIMELESS-interacting protein">
    <location>
        <begin position="1"/>
        <end position="283"/>
    </location>
</feature>
<feature type="region of interest" description="Disordered" evidence="3">
    <location>
        <begin position="1"/>
        <end position="68"/>
    </location>
</feature>
<feature type="region of interest" description="Interaction with TIMELESS" evidence="1">
    <location>
        <begin position="74"/>
        <end position="150"/>
    </location>
</feature>
<feature type="region of interest" description="Disordered" evidence="3">
    <location>
        <begin position="186"/>
        <end position="205"/>
    </location>
</feature>
<feature type="region of interest" description="Disordered" evidence="3">
    <location>
        <begin position="217"/>
        <end position="238"/>
    </location>
</feature>
<feature type="compositionally biased region" description="Acidic residues" evidence="3">
    <location>
        <begin position="15"/>
        <end position="24"/>
    </location>
</feature>
<dbReference type="EMBL" id="AJ851484">
    <property type="protein sequence ID" value="CAH65118.1"/>
    <property type="molecule type" value="mRNA"/>
</dbReference>
<dbReference type="RefSeq" id="NP_001012708.1">
    <property type="nucleotide sequence ID" value="NM_001012690.1"/>
</dbReference>
<dbReference type="RefSeq" id="XP_046780870.1">
    <property type="nucleotide sequence ID" value="XM_046924914.1"/>
</dbReference>
<dbReference type="SMR" id="Q5F416"/>
<dbReference type="FunCoup" id="Q5F416">
    <property type="interactions" value="1526"/>
</dbReference>
<dbReference type="STRING" id="9031.ENSGALP00000045507"/>
<dbReference type="PaxDb" id="9031-ENSGALP00000012365"/>
<dbReference type="GeneID" id="415548"/>
<dbReference type="KEGG" id="gga:415548"/>
<dbReference type="CTD" id="54962"/>
<dbReference type="VEuPathDB" id="HostDB:geneid_415548"/>
<dbReference type="eggNOG" id="KOG3004">
    <property type="taxonomic scope" value="Eukaryota"/>
</dbReference>
<dbReference type="InParanoid" id="Q5F416"/>
<dbReference type="OrthoDB" id="437078at2759"/>
<dbReference type="PhylomeDB" id="Q5F416"/>
<dbReference type="PRO" id="PR:Q5F416"/>
<dbReference type="Proteomes" id="UP000000539">
    <property type="component" value="Unassembled WGS sequence"/>
</dbReference>
<dbReference type="GO" id="GO:0000785">
    <property type="term" value="C:chromatin"/>
    <property type="evidence" value="ECO:0000250"/>
    <property type="project" value="UniProtKB"/>
</dbReference>
<dbReference type="GO" id="GO:0005737">
    <property type="term" value="C:cytoplasm"/>
    <property type="evidence" value="ECO:0007669"/>
    <property type="project" value="UniProtKB-SubCell"/>
</dbReference>
<dbReference type="GO" id="GO:0005634">
    <property type="term" value="C:nucleus"/>
    <property type="evidence" value="ECO:0000250"/>
    <property type="project" value="UniProtKB"/>
</dbReference>
<dbReference type="GO" id="GO:0031298">
    <property type="term" value="C:replication fork protection complex"/>
    <property type="evidence" value="ECO:0000318"/>
    <property type="project" value="GO_Central"/>
</dbReference>
<dbReference type="GO" id="GO:0003677">
    <property type="term" value="F:DNA binding"/>
    <property type="evidence" value="ECO:0000318"/>
    <property type="project" value="GO_Central"/>
</dbReference>
<dbReference type="GO" id="GO:0044770">
    <property type="term" value="P:cell cycle phase transition"/>
    <property type="evidence" value="ECO:0000250"/>
    <property type="project" value="UniProtKB"/>
</dbReference>
<dbReference type="GO" id="GO:0051301">
    <property type="term" value="P:cell division"/>
    <property type="evidence" value="ECO:0007669"/>
    <property type="project" value="UniProtKB-KW"/>
</dbReference>
<dbReference type="GO" id="GO:0000076">
    <property type="term" value="P:DNA replication checkpoint signaling"/>
    <property type="evidence" value="ECO:0000250"/>
    <property type="project" value="UniProtKB"/>
</dbReference>
<dbReference type="GO" id="GO:0031573">
    <property type="term" value="P:mitotic intra-S DNA damage checkpoint signaling"/>
    <property type="evidence" value="ECO:0000250"/>
    <property type="project" value="UniProtKB"/>
</dbReference>
<dbReference type="GO" id="GO:0008284">
    <property type="term" value="P:positive regulation of cell population proliferation"/>
    <property type="evidence" value="ECO:0000250"/>
    <property type="project" value="UniProtKB"/>
</dbReference>
<dbReference type="GO" id="GO:0043111">
    <property type="term" value="P:replication fork arrest"/>
    <property type="evidence" value="ECO:0000318"/>
    <property type="project" value="GO_Central"/>
</dbReference>
<dbReference type="GO" id="GO:0031297">
    <property type="term" value="P:replication fork processing"/>
    <property type="evidence" value="ECO:0007669"/>
    <property type="project" value="InterPro"/>
</dbReference>
<dbReference type="InterPro" id="IPR012923">
    <property type="entry name" value="Csm3"/>
</dbReference>
<dbReference type="InterPro" id="IPR040038">
    <property type="entry name" value="TIPIN/Csm3/Swi3"/>
</dbReference>
<dbReference type="PANTHER" id="PTHR13220">
    <property type="entry name" value="TIMELESS INTERACTING-RELATED"/>
    <property type="match status" value="1"/>
</dbReference>
<dbReference type="PANTHER" id="PTHR13220:SF11">
    <property type="entry name" value="TIMELESS-INTERACTING PROTEIN"/>
    <property type="match status" value="1"/>
</dbReference>
<dbReference type="Pfam" id="PF07962">
    <property type="entry name" value="Swi3"/>
    <property type="match status" value="1"/>
</dbReference>
<evidence type="ECO:0000250" key="1"/>
<evidence type="ECO:0000250" key="2">
    <source>
        <dbReference type="UniProtKB" id="Q9BVW5"/>
    </source>
</evidence>
<evidence type="ECO:0000256" key="3">
    <source>
        <dbReference type="SAM" id="MobiDB-lite"/>
    </source>
</evidence>
<evidence type="ECO:0000305" key="4"/>
<name>TIPIN_CHICK</name>
<keyword id="KW-0131">Cell cycle</keyword>
<keyword id="KW-0132">Cell division</keyword>
<keyword id="KW-0963">Cytoplasm</keyword>
<keyword id="KW-0227">DNA damage</keyword>
<keyword id="KW-0498">Mitosis</keyword>
<keyword id="KW-0539">Nucleus</keyword>
<keyword id="KW-1185">Reference proteome</keyword>
<comment type="function">
    <text evidence="1">Plays an important role in the control of DNA replication and the maintenance of replication fork stability. Important for cell survival after DNA damage or replication stress. May be required for the replication checkpoint induced by hydroxyurea or ultraviolet light (By similarity).</text>
</comment>
<comment type="subunit">
    <text evidence="1">Interacts with TIMELESS, which impairs TIMELESS self-association.</text>
</comment>
<comment type="subcellular location">
    <subcellularLocation>
        <location evidence="2">Cytoplasm</location>
    </subcellularLocation>
    <subcellularLocation>
        <location evidence="2">Nucleus</location>
    </subcellularLocation>
</comment>
<comment type="similarity">
    <text evidence="4">Belongs to the CSM3 family.</text>
</comment>
<sequence length="283" mass="31827">MAMIDPLENNLFDLPDYENTEDETFPPLPPPTSPGRGDAEWAQANGDPDGNQQSETKDSSSAARKAVKRSIPKLDANRLVSERGLPALRHMFDNVKFKGKGHEAEDLKTLLRHMEHWAHRLFPKLQFDDFIDRVESLGNKKEVQTCLKRIRLDLPILHEDFTANEGGGGESNGLDMATEEVHSFSGNVGELDSLPGTTLTEEQQQRIKRNRQLALERRQAKMQCNSQSQHDELSPSYPEEELNIPVARDLTGALEDTQVTATNVAVTETEDRERELQCASEKQ</sequence>